<proteinExistence type="inferred from homology"/>
<gene>
    <name evidence="1" type="primary">purL</name>
    <name type="ordered locus">GOX2304</name>
</gene>
<feature type="chain" id="PRO_0000100457" description="Phosphoribosylformylglycinamidine synthase subunit PurL">
    <location>
        <begin position="1"/>
        <end position="734"/>
    </location>
</feature>
<feature type="active site" evidence="1">
    <location>
        <position position="46"/>
    </location>
</feature>
<feature type="active site" description="Proton acceptor" evidence="1">
    <location>
        <position position="92"/>
    </location>
</feature>
<feature type="binding site" evidence="1">
    <location>
        <position position="49"/>
    </location>
    <ligand>
        <name>ATP</name>
        <dbReference type="ChEBI" id="CHEBI:30616"/>
    </ligand>
</feature>
<feature type="binding site" evidence="1">
    <location>
        <position position="88"/>
    </location>
    <ligand>
        <name>ATP</name>
        <dbReference type="ChEBI" id="CHEBI:30616"/>
    </ligand>
</feature>
<feature type="binding site" evidence="1">
    <location>
        <position position="90"/>
    </location>
    <ligand>
        <name>Mg(2+)</name>
        <dbReference type="ChEBI" id="CHEBI:18420"/>
        <label>1</label>
    </ligand>
</feature>
<feature type="binding site" evidence="1">
    <location>
        <begin position="91"/>
        <end position="94"/>
    </location>
    <ligand>
        <name>substrate</name>
    </ligand>
</feature>
<feature type="binding site" evidence="1">
    <location>
        <position position="113"/>
    </location>
    <ligand>
        <name>substrate</name>
    </ligand>
</feature>
<feature type="binding site" evidence="1">
    <location>
        <position position="114"/>
    </location>
    <ligand>
        <name>Mg(2+)</name>
        <dbReference type="ChEBI" id="CHEBI:18420"/>
        <label>2</label>
    </ligand>
</feature>
<feature type="binding site" evidence="1">
    <location>
        <position position="237"/>
    </location>
    <ligand>
        <name>substrate</name>
    </ligand>
</feature>
<feature type="binding site" evidence="1">
    <location>
        <position position="265"/>
    </location>
    <ligand>
        <name>Mg(2+)</name>
        <dbReference type="ChEBI" id="CHEBI:18420"/>
        <label>2</label>
    </ligand>
</feature>
<feature type="binding site" evidence="1">
    <location>
        <begin position="309"/>
        <end position="311"/>
    </location>
    <ligand>
        <name>substrate</name>
    </ligand>
</feature>
<feature type="binding site" evidence="1">
    <location>
        <position position="489"/>
    </location>
    <ligand>
        <name>ATP</name>
        <dbReference type="ChEBI" id="CHEBI:30616"/>
    </ligand>
</feature>
<feature type="binding site" evidence="1">
    <location>
        <position position="526"/>
    </location>
    <ligand>
        <name>ATP</name>
        <dbReference type="ChEBI" id="CHEBI:30616"/>
    </ligand>
</feature>
<feature type="binding site" evidence="1">
    <location>
        <position position="527"/>
    </location>
    <ligand>
        <name>Mg(2+)</name>
        <dbReference type="ChEBI" id="CHEBI:18420"/>
        <label>1</label>
    </ligand>
</feature>
<feature type="binding site" evidence="1">
    <location>
        <position position="529"/>
    </location>
    <ligand>
        <name>substrate</name>
    </ligand>
</feature>
<dbReference type="EC" id="6.3.5.3" evidence="1"/>
<dbReference type="EMBL" id="CP000009">
    <property type="protein sequence ID" value="AAW62037.1"/>
    <property type="molecule type" value="Genomic_DNA"/>
</dbReference>
<dbReference type="RefSeq" id="WP_011253807.1">
    <property type="nucleotide sequence ID" value="NC_006677.1"/>
</dbReference>
<dbReference type="SMR" id="Q5FNL0"/>
<dbReference type="STRING" id="290633.GOX2304"/>
<dbReference type="KEGG" id="gox:GOX2304"/>
<dbReference type="eggNOG" id="COG0046">
    <property type="taxonomic scope" value="Bacteria"/>
</dbReference>
<dbReference type="HOGENOM" id="CLU_003100_0_1_5"/>
<dbReference type="UniPathway" id="UPA00074">
    <property type="reaction ID" value="UER00128"/>
</dbReference>
<dbReference type="Proteomes" id="UP000006375">
    <property type="component" value="Chromosome"/>
</dbReference>
<dbReference type="GO" id="GO:0005737">
    <property type="term" value="C:cytoplasm"/>
    <property type="evidence" value="ECO:0007669"/>
    <property type="project" value="UniProtKB-SubCell"/>
</dbReference>
<dbReference type="GO" id="GO:0005524">
    <property type="term" value="F:ATP binding"/>
    <property type="evidence" value="ECO:0007669"/>
    <property type="project" value="UniProtKB-UniRule"/>
</dbReference>
<dbReference type="GO" id="GO:0000287">
    <property type="term" value="F:magnesium ion binding"/>
    <property type="evidence" value="ECO:0007669"/>
    <property type="project" value="UniProtKB-UniRule"/>
</dbReference>
<dbReference type="GO" id="GO:0004642">
    <property type="term" value="F:phosphoribosylformylglycinamidine synthase activity"/>
    <property type="evidence" value="ECO:0007669"/>
    <property type="project" value="UniProtKB-UniRule"/>
</dbReference>
<dbReference type="GO" id="GO:0006189">
    <property type="term" value="P:'de novo' IMP biosynthetic process"/>
    <property type="evidence" value="ECO:0007669"/>
    <property type="project" value="UniProtKB-UniRule"/>
</dbReference>
<dbReference type="CDD" id="cd02203">
    <property type="entry name" value="PurL_repeat1"/>
    <property type="match status" value="1"/>
</dbReference>
<dbReference type="CDD" id="cd02204">
    <property type="entry name" value="PurL_repeat2"/>
    <property type="match status" value="1"/>
</dbReference>
<dbReference type="FunFam" id="3.30.1330.10:FF:000004">
    <property type="entry name" value="Phosphoribosylformylglycinamidine synthase subunit PurL"/>
    <property type="match status" value="1"/>
</dbReference>
<dbReference type="Gene3D" id="3.90.650.10">
    <property type="entry name" value="PurM-like C-terminal domain"/>
    <property type="match status" value="2"/>
</dbReference>
<dbReference type="Gene3D" id="3.30.1330.10">
    <property type="entry name" value="PurM-like, N-terminal domain"/>
    <property type="match status" value="2"/>
</dbReference>
<dbReference type="HAMAP" id="MF_00420">
    <property type="entry name" value="PurL_2"/>
    <property type="match status" value="1"/>
</dbReference>
<dbReference type="InterPro" id="IPR010074">
    <property type="entry name" value="PRibForGlyAmidine_synth_PurL"/>
</dbReference>
<dbReference type="InterPro" id="IPR041609">
    <property type="entry name" value="PurL_linker"/>
</dbReference>
<dbReference type="InterPro" id="IPR010918">
    <property type="entry name" value="PurM-like_C_dom"/>
</dbReference>
<dbReference type="InterPro" id="IPR036676">
    <property type="entry name" value="PurM-like_C_sf"/>
</dbReference>
<dbReference type="InterPro" id="IPR016188">
    <property type="entry name" value="PurM-like_N"/>
</dbReference>
<dbReference type="InterPro" id="IPR036921">
    <property type="entry name" value="PurM-like_N_sf"/>
</dbReference>
<dbReference type="NCBIfam" id="TIGR01736">
    <property type="entry name" value="FGAM_synth_II"/>
    <property type="match status" value="1"/>
</dbReference>
<dbReference type="NCBIfam" id="NF002290">
    <property type="entry name" value="PRK01213.1"/>
    <property type="match status" value="1"/>
</dbReference>
<dbReference type="PANTHER" id="PTHR43555">
    <property type="entry name" value="PHOSPHORIBOSYLFORMYLGLYCINAMIDINE SYNTHASE SUBUNIT PURL"/>
    <property type="match status" value="1"/>
</dbReference>
<dbReference type="PANTHER" id="PTHR43555:SF1">
    <property type="entry name" value="PHOSPHORIBOSYLFORMYLGLYCINAMIDINE SYNTHASE SUBUNIT PURL"/>
    <property type="match status" value="1"/>
</dbReference>
<dbReference type="Pfam" id="PF00586">
    <property type="entry name" value="AIRS"/>
    <property type="match status" value="2"/>
</dbReference>
<dbReference type="Pfam" id="PF02769">
    <property type="entry name" value="AIRS_C"/>
    <property type="match status" value="2"/>
</dbReference>
<dbReference type="Pfam" id="PF18072">
    <property type="entry name" value="FGAR-AT_linker"/>
    <property type="match status" value="1"/>
</dbReference>
<dbReference type="PIRSF" id="PIRSF001587">
    <property type="entry name" value="FGAM_synthase_II"/>
    <property type="match status" value="1"/>
</dbReference>
<dbReference type="SUPFAM" id="SSF56042">
    <property type="entry name" value="PurM C-terminal domain-like"/>
    <property type="match status" value="2"/>
</dbReference>
<dbReference type="SUPFAM" id="SSF55326">
    <property type="entry name" value="PurM N-terminal domain-like"/>
    <property type="match status" value="2"/>
</dbReference>
<protein>
    <recommendedName>
        <fullName evidence="1">Phosphoribosylformylglycinamidine synthase subunit PurL</fullName>
        <shortName evidence="1">FGAM synthase</shortName>
        <ecNumber evidence="1">6.3.5.3</ecNumber>
    </recommendedName>
    <alternativeName>
        <fullName evidence="1">Formylglycinamide ribonucleotide amidotransferase subunit II</fullName>
        <shortName evidence="1">FGAR amidotransferase II</shortName>
        <shortName evidence="1">FGAR-AT II</shortName>
    </alternativeName>
    <alternativeName>
        <fullName evidence="1">Glutamine amidotransferase PurL</fullName>
    </alternativeName>
    <alternativeName>
        <fullName evidence="1">Phosphoribosylformylglycinamidine synthase subunit II</fullName>
    </alternativeName>
</protein>
<evidence type="ECO:0000255" key="1">
    <source>
        <dbReference type="HAMAP-Rule" id="MF_00420"/>
    </source>
</evidence>
<keyword id="KW-0067">ATP-binding</keyword>
<keyword id="KW-0963">Cytoplasm</keyword>
<keyword id="KW-0436">Ligase</keyword>
<keyword id="KW-0460">Magnesium</keyword>
<keyword id="KW-0479">Metal-binding</keyword>
<keyword id="KW-0547">Nucleotide-binding</keyword>
<keyword id="KW-0658">Purine biosynthesis</keyword>
<keyword id="KW-1185">Reference proteome</keyword>
<name>PURL_GLUOX</name>
<sequence>MSVTIDAQLAQSFGLTGEEYDKLVTIMGRTPSFTELGIFSVMWSEHCSYKSSRIHLKTLPTKAPWVIHGPGENAGVVDIGEGLAAVFKMESHNHPSFIEPYQGAATGVGGILRDVFTMGARPVANLNALRFGDPKHAGTRRIVDGVVRGVGGYGNCVGVPTVGGEVNFHKAYDGNPLVNAMTVGVAKQDKIFLSAAAGVGNPVVYVGSKTGRDGIHGATMSSAEFDEEAASKRPTVQVGDPFIEKLLIEACLELMATDAIVAIQDMGAAGLTSSAVEMAGKGGVGIELNLDAVPQREPNMSAYEMMLSESQERMLMVLKPERTEVARAIFAKWELDFAVIGELTDTGRITIRHKGEVEADIPLAPLADEAPVYNRPTVPLKAPARIETPADPEGIEKALLTLVGCPDLASRAWVWNQYDGSVGGNTARRPGAADAAVVRVEGTRLGLALTTDCTPRYCQADPKTGGAQAVAEAWRNITATGATPLAVTDNLNFGNPERPEIMAQFADAIKGMGDACRALDFPVVSGNVSLYNETRSPSGEAQAILPTPAIGALGVLADASKSIGLAMPDAHDLVLVGGIRGELGQSLWLREICQREDGAPPVVDLAVERRNGDFVRSQIGAGAVAACHDIADGGLLVTVAEMVMASGVGCTLEAAPTDVAAHAFWFGEDQGCYVIATSDGAALVAAAEKANVLAMRLGRSGGTDLELPGTVRVSAERLREINAAFFPRFMGEGA</sequence>
<comment type="function">
    <text evidence="1">Part of the phosphoribosylformylglycinamidine synthase complex involved in the purines biosynthetic pathway. Catalyzes the ATP-dependent conversion of formylglycinamide ribonucleotide (FGAR) and glutamine to yield formylglycinamidine ribonucleotide (FGAM) and glutamate. The FGAM synthase complex is composed of three subunits. PurQ produces an ammonia molecule by converting glutamine to glutamate. PurL transfers the ammonia molecule to FGAR to form FGAM in an ATP-dependent manner. PurS interacts with PurQ and PurL and is thought to assist in the transfer of the ammonia molecule from PurQ to PurL.</text>
</comment>
<comment type="catalytic activity">
    <reaction evidence="1">
        <text>N(2)-formyl-N(1)-(5-phospho-beta-D-ribosyl)glycinamide + L-glutamine + ATP + H2O = 2-formamido-N(1)-(5-O-phospho-beta-D-ribosyl)acetamidine + L-glutamate + ADP + phosphate + H(+)</text>
        <dbReference type="Rhea" id="RHEA:17129"/>
        <dbReference type="ChEBI" id="CHEBI:15377"/>
        <dbReference type="ChEBI" id="CHEBI:15378"/>
        <dbReference type="ChEBI" id="CHEBI:29985"/>
        <dbReference type="ChEBI" id="CHEBI:30616"/>
        <dbReference type="ChEBI" id="CHEBI:43474"/>
        <dbReference type="ChEBI" id="CHEBI:58359"/>
        <dbReference type="ChEBI" id="CHEBI:147286"/>
        <dbReference type="ChEBI" id="CHEBI:147287"/>
        <dbReference type="ChEBI" id="CHEBI:456216"/>
        <dbReference type="EC" id="6.3.5.3"/>
    </reaction>
</comment>
<comment type="pathway">
    <text evidence="1">Purine metabolism; IMP biosynthesis via de novo pathway; 5-amino-1-(5-phospho-D-ribosyl)imidazole from N(2)-formyl-N(1)-(5-phospho-D-ribosyl)glycinamide: step 1/2.</text>
</comment>
<comment type="subunit">
    <text evidence="1">Monomer. Part of the FGAM synthase complex composed of 1 PurL, 1 PurQ and 2 PurS subunits.</text>
</comment>
<comment type="subcellular location">
    <subcellularLocation>
        <location evidence="1">Cytoplasm</location>
    </subcellularLocation>
</comment>
<comment type="similarity">
    <text evidence="1">Belongs to the FGAMS family.</text>
</comment>
<reference key="1">
    <citation type="journal article" date="2005" name="Nat. Biotechnol.">
        <title>Complete genome sequence of the acetic acid bacterium Gluconobacter oxydans.</title>
        <authorList>
            <person name="Prust C."/>
            <person name="Hoffmeister M."/>
            <person name="Liesegang H."/>
            <person name="Wiezer A."/>
            <person name="Fricke W.F."/>
            <person name="Ehrenreich A."/>
            <person name="Gottschalk G."/>
            <person name="Deppenmeier U."/>
        </authorList>
    </citation>
    <scope>NUCLEOTIDE SEQUENCE [LARGE SCALE GENOMIC DNA]</scope>
    <source>
        <strain>621H</strain>
    </source>
</reference>
<organism>
    <name type="scientific">Gluconobacter oxydans (strain 621H)</name>
    <name type="common">Gluconobacter suboxydans</name>
    <dbReference type="NCBI Taxonomy" id="290633"/>
    <lineage>
        <taxon>Bacteria</taxon>
        <taxon>Pseudomonadati</taxon>
        <taxon>Pseudomonadota</taxon>
        <taxon>Alphaproteobacteria</taxon>
        <taxon>Acetobacterales</taxon>
        <taxon>Acetobacteraceae</taxon>
        <taxon>Gluconobacter</taxon>
    </lineage>
</organism>
<accession>Q5FNL0</accession>